<sequence length="115" mass="13345">MVRVKRGNVAAKRRKKILKLAKGFKGAHSRLFRTANGQVMKALVYSYVGRKRRKRDFKRLWICRVNAASRSHGLNYSKLRNLMKQASLNINLKMLAQLVLFDKKAFSQIIDLVNK</sequence>
<dbReference type="EMBL" id="AY741371">
    <property type="protein sequence ID" value="AAX13817.1"/>
    <property type="molecule type" value="Genomic_DNA"/>
</dbReference>
<dbReference type="RefSeq" id="YP_277318.1">
    <property type="nucleotide sequence ID" value="NC_007288.1"/>
</dbReference>
<dbReference type="SMR" id="Q4G3E9"/>
<dbReference type="STRING" id="2903.Q4G3E9"/>
<dbReference type="GeneID" id="3562551"/>
<dbReference type="GO" id="GO:0009507">
    <property type="term" value="C:chloroplast"/>
    <property type="evidence" value="ECO:0007669"/>
    <property type="project" value="UniProtKB-SubCell"/>
</dbReference>
<dbReference type="GO" id="GO:1990904">
    <property type="term" value="C:ribonucleoprotein complex"/>
    <property type="evidence" value="ECO:0007669"/>
    <property type="project" value="UniProtKB-KW"/>
</dbReference>
<dbReference type="GO" id="GO:0005840">
    <property type="term" value="C:ribosome"/>
    <property type="evidence" value="ECO:0007669"/>
    <property type="project" value="UniProtKB-KW"/>
</dbReference>
<dbReference type="GO" id="GO:0019843">
    <property type="term" value="F:rRNA binding"/>
    <property type="evidence" value="ECO:0007669"/>
    <property type="project" value="UniProtKB-UniRule"/>
</dbReference>
<dbReference type="GO" id="GO:0003735">
    <property type="term" value="F:structural constituent of ribosome"/>
    <property type="evidence" value="ECO:0007669"/>
    <property type="project" value="InterPro"/>
</dbReference>
<dbReference type="GO" id="GO:0000027">
    <property type="term" value="P:ribosomal large subunit assembly"/>
    <property type="evidence" value="ECO:0007669"/>
    <property type="project" value="UniProtKB-UniRule"/>
</dbReference>
<dbReference type="GO" id="GO:0006412">
    <property type="term" value="P:translation"/>
    <property type="evidence" value="ECO:0007669"/>
    <property type="project" value="InterPro"/>
</dbReference>
<dbReference type="CDD" id="cd07026">
    <property type="entry name" value="Ribosomal_L20"/>
    <property type="match status" value="1"/>
</dbReference>
<dbReference type="FunFam" id="1.10.1900.20:FF:000001">
    <property type="entry name" value="50S ribosomal protein L20"/>
    <property type="match status" value="1"/>
</dbReference>
<dbReference type="Gene3D" id="6.10.160.10">
    <property type="match status" value="1"/>
</dbReference>
<dbReference type="Gene3D" id="1.10.1900.20">
    <property type="entry name" value="Ribosomal protein L20"/>
    <property type="match status" value="1"/>
</dbReference>
<dbReference type="HAMAP" id="MF_00382">
    <property type="entry name" value="Ribosomal_bL20"/>
    <property type="match status" value="1"/>
</dbReference>
<dbReference type="InterPro" id="IPR005813">
    <property type="entry name" value="Ribosomal_bL20"/>
</dbReference>
<dbReference type="InterPro" id="IPR049946">
    <property type="entry name" value="RIBOSOMAL_L20_CS"/>
</dbReference>
<dbReference type="InterPro" id="IPR035566">
    <property type="entry name" value="Ribosomal_protein_bL20_C"/>
</dbReference>
<dbReference type="NCBIfam" id="TIGR01032">
    <property type="entry name" value="rplT_bact"/>
    <property type="match status" value="1"/>
</dbReference>
<dbReference type="PANTHER" id="PTHR10986">
    <property type="entry name" value="39S RIBOSOMAL PROTEIN L20"/>
    <property type="match status" value="1"/>
</dbReference>
<dbReference type="Pfam" id="PF00453">
    <property type="entry name" value="Ribosomal_L20"/>
    <property type="match status" value="1"/>
</dbReference>
<dbReference type="PRINTS" id="PR00062">
    <property type="entry name" value="RIBOSOMALL20"/>
</dbReference>
<dbReference type="SUPFAM" id="SSF74731">
    <property type="entry name" value="Ribosomal protein L20"/>
    <property type="match status" value="1"/>
</dbReference>
<dbReference type="PROSITE" id="PS00937">
    <property type="entry name" value="RIBOSOMAL_L20"/>
    <property type="match status" value="1"/>
</dbReference>
<organism>
    <name type="scientific">Emiliania huxleyi</name>
    <name type="common">Coccolithophore</name>
    <name type="synonym">Pontosphaera huxleyi</name>
    <dbReference type="NCBI Taxonomy" id="2903"/>
    <lineage>
        <taxon>Eukaryota</taxon>
        <taxon>Haptista</taxon>
        <taxon>Haptophyta</taxon>
        <taxon>Prymnesiophyceae</taxon>
        <taxon>Isochrysidales</taxon>
        <taxon>Noelaerhabdaceae</taxon>
        <taxon>Emiliania</taxon>
    </lineage>
</organism>
<protein>
    <recommendedName>
        <fullName evidence="1">Large ribosomal subunit protein bL20c</fullName>
    </recommendedName>
    <alternativeName>
        <fullName evidence="2">50S ribosomal protein L20, chloroplastic</fullName>
    </alternativeName>
</protein>
<gene>
    <name evidence="1" type="primary">rpl20</name>
</gene>
<reference key="1">
    <citation type="journal article" date="2005" name="DNA Res.">
        <title>The complete plastid genome sequence of the haptophyte Emiliania huxleyi: a comparison to other plastid genomes.</title>
        <authorList>
            <person name="Sanchez-Puerta M.V."/>
            <person name="Bachvaroff T.R."/>
            <person name="Delwiche C.F."/>
        </authorList>
    </citation>
    <scope>NUCLEOTIDE SEQUENCE [LARGE SCALE GENOMIC DNA]</scope>
    <source>
        <strain>CCMP373 / CSIRO-CS-57 / BT6</strain>
    </source>
</reference>
<feature type="chain" id="PRO_0000276434" description="Large ribosomal subunit protein bL20c">
    <location>
        <begin position="1"/>
        <end position="115"/>
    </location>
</feature>
<geneLocation type="chloroplast"/>
<keyword id="KW-0150">Chloroplast</keyword>
<keyword id="KW-0934">Plastid</keyword>
<keyword id="KW-0687">Ribonucleoprotein</keyword>
<keyword id="KW-0689">Ribosomal protein</keyword>
<keyword id="KW-0694">RNA-binding</keyword>
<keyword id="KW-0699">rRNA-binding</keyword>
<accession>Q4G3E9</accession>
<comment type="function">
    <text evidence="1">Binds directly to 23S ribosomal RNA and is necessary for the in vitro assembly process of the 50S ribosomal subunit. It is not involved in the protein synthesizing functions of that subunit.</text>
</comment>
<comment type="subcellular location">
    <subcellularLocation>
        <location>Plastid</location>
        <location>Chloroplast</location>
    </subcellularLocation>
</comment>
<comment type="similarity">
    <text evidence="1">Belongs to the bacterial ribosomal protein bL20 family.</text>
</comment>
<proteinExistence type="inferred from homology"/>
<name>RK20_EMIHU</name>
<evidence type="ECO:0000255" key="1">
    <source>
        <dbReference type="HAMAP-Rule" id="MF_00382"/>
    </source>
</evidence>
<evidence type="ECO:0000305" key="2"/>